<organism>
    <name type="scientific">Bradyrhizobium diazoefficiens (strain JCM 10833 / BCRC 13528 / IAM 13628 / NBRC 14792 / USDA 110)</name>
    <dbReference type="NCBI Taxonomy" id="224911"/>
    <lineage>
        <taxon>Bacteria</taxon>
        <taxon>Pseudomonadati</taxon>
        <taxon>Pseudomonadota</taxon>
        <taxon>Alphaproteobacteria</taxon>
        <taxon>Hyphomicrobiales</taxon>
        <taxon>Nitrobacteraceae</taxon>
        <taxon>Bradyrhizobium</taxon>
    </lineage>
</organism>
<protein>
    <recommendedName>
        <fullName evidence="1">Single-stranded DNA-binding protein</fullName>
        <shortName evidence="1">SSB</shortName>
    </recommendedName>
</protein>
<gene>
    <name type="primary">ssb</name>
    <name type="ordered locus">bll4698</name>
</gene>
<keyword id="KW-0227">DNA damage</keyword>
<keyword id="KW-0233">DNA recombination</keyword>
<keyword id="KW-0234">DNA repair</keyword>
<keyword id="KW-0235">DNA replication</keyword>
<keyword id="KW-0238">DNA-binding</keyword>
<keyword id="KW-1185">Reference proteome</keyword>
<feature type="chain" id="PRO_0000096012" description="Single-stranded DNA-binding protein">
    <location>
        <begin position="1"/>
        <end position="164"/>
    </location>
</feature>
<feature type="domain" description="SSB" evidence="1">
    <location>
        <begin position="5"/>
        <end position="111"/>
    </location>
</feature>
<feature type="DNA-binding region" evidence="1">
    <location>
        <begin position="54"/>
        <end position="60"/>
    </location>
</feature>
<feature type="region of interest" description="Disordered" evidence="2">
    <location>
        <begin position="118"/>
        <end position="164"/>
    </location>
</feature>
<feature type="short sequence motif" description="Important for interaction with partner proteins" evidence="1">
    <location>
        <begin position="159"/>
        <end position="164"/>
    </location>
</feature>
<feature type="compositionally biased region" description="Low complexity" evidence="2">
    <location>
        <begin position="135"/>
        <end position="148"/>
    </location>
</feature>
<comment type="function">
    <text evidence="1">Plays an important role in DNA replication, recombination and repair. Binds to ssDNA and to an array of partner proteins to recruit them to their sites of action during DNA metabolism.</text>
</comment>
<comment type="subunit">
    <text evidence="1">Homotetramer.</text>
</comment>
<proteinExistence type="inferred from homology"/>
<reference key="1">
    <citation type="journal article" date="2002" name="DNA Res.">
        <title>Complete genomic sequence of nitrogen-fixing symbiotic bacterium Bradyrhizobium japonicum USDA110.</title>
        <authorList>
            <person name="Kaneko T."/>
            <person name="Nakamura Y."/>
            <person name="Sato S."/>
            <person name="Minamisawa K."/>
            <person name="Uchiumi T."/>
            <person name="Sasamoto S."/>
            <person name="Watanabe A."/>
            <person name="Idesawa K."/>
            <person name="Iriguchi M."/>
            <person name="Kawashima K."/>
            <person name="Kohara M."/>
            <person name="Matsumoto M."/>
            <person name="Shimpo S."/>
            <person name="Tsuruoka H."/>
            <person name="Wada T."/>
            <person name="Yamada M."/>
            <person name="Tabata S."/>
        </authorList>
    </citation>
    <scope>NUCLEOTIDE SEQUENCE [LARGE SCALE GENOMIC DNA]</scope>
    <source>
        <strain>JCM 10833 / BCRC 13528 / IAM 13628 / NBRC 14792 / USDA 110</strain>
    </source>
</reference>
<sequence>MAGSVNKVILVGNLGKDPEIRRTQDGRPIANLSIATSETWRDKNSGERKEKTEWHRVVIFNEGLCKVAEQYLKKGAKVYIEGALQTRKWTDQSGVEKYSTEVVLQGFNSTLTMLDGRGGGGGGSFGEEPGGDFGSSGPVSSAPRRAVAAGGGGRNSDMDDDIPF</sequence>
<accession>Q89L50</accession>
<name>SSB_BRADU</name>
<dbReference type="EMBL" id="BA000040">
    <property type="protein sequence ID" value="BAC49963.1"/>
    <property type="molecule type" value="Genomic_DNA"/>
</dbReference>
<dbReference type="RefSeq" id="NP_771338.1">
    <property type="nucleotide sequence ID" value="NC_004463.1"/>
</dbReference>
<dbReference type="RefSeq" id="WP_011087466.1">
    <property type="nucleotide sequence ID" value="NC_004463.1"/>
</dbReference>
<dbReference type="SMR" id="Q89L50"/>
<dbReference type="FunCoup" id="Q89L50">
    <property type="interactions" value="490"/>
</dbReference>
<dbReference type="STRING" id="224911.AAV28_20785"/>
<dbReference type="EnsemblBacteria" id="BAC49963">
    <property type="protein sequence ID" value="BAC49963"/>
    <property type="gene ID" value="BAC49963"/>
</dbReference>
<dbReference type="GeneID" id="46491708"/>
<dbReference type="KEGG" id="bja:bll4698"/>
<dbReference type="PATRIC" id="fig|224911.44.peg.4526"/>
<dbReference type="eggNOG" id="COG0629">
    <property type="taxonomic scope" value="Bacteria"/>
</dbReference>
<dbReference type="HOGENOM" id="CLU_078758_0_2_5"/>
<dbReference type="InParanoid" id="Q89L50"/>
<dbReference type="OrthoDB" id="9809878at2"/>
<dbReference type="PhylomeDB" id="Q89L50"/>
<dbReference type="Proteomes" id="UP000002526">
    <property type="component" value="Chromosome"/>
</dbReference>
<dbReference type="GO" id="GO:0009295">
    <property type="term" value="C:nucleoid"/>
    <property type="evidence" value="ECO:0000318"/>
    <property type="project" value="GO_Central"/>
</dbReference>
<dbReference type="GO" id="GO:0008047">
    <property type="term" value="F:enzyme activator activity"/>
    <property type="evidence" value="ECO:0000318"/>
    <property type="project" value="GO_Central"/>
</dbReference>
<dbReference type="GO" id="GO:0003697">
    <property type="term" value="F:single-stranded DNA binding"/>
    <property type="evidence" value="ECO:0000318"/>
    <property type="project" value="GO_Central"/>
</dbReference>
<dbReference type="GO" id="GO:0006310">
    <property type="term" value="P:DNA recombination"/>
    <property type="evidence" value="ECO:0007669"/>
    <property type="project" value="UniProtKB-UniRule"/>
</dbReference>
<dbReference type="GO" id="GO:0006281">
    <property type="term" value="P:DNA repair"/>
    <property type="evidence" value="ECO:0007669"/>
    <property type="project" value="UniProtKB-UniRule"/>
</dbReference>
<dbReference type="GO" id="GO:0006260">
    <property type="term" value="P:DNA replication"/>
    <property type="evidence" value="ECO:0000318"/>
    <property type="project" value="GO_Central"/>
</dbReference>
<dbReference type="CDD" id="cd04496">
    <property type="entry name" value="SSB_OBF"/>
    <property type="match status" value="1"/>
</dbReference>
<dbReference type="FunFam" id="2.40.50.140:FF:000255">
    <property type="entry name" value="Single-stranded DNA-binding protein"/>
    <property type="match status" value="1"/>
</dbReference>
<dbReference type="Gene3D" id="2.40.50.140">
    <property type="entry name" value="Nucleic acid-binding proteins"/>
    <property type="match status" value="1"/>
</dbReference>
<dbReference type="HAMAP" id="MF_00984">
    <property type="entry name" value="SSB"/>
    <property type="match status" value="1"/>
</dbReference>
<dbReference type="InterPro" id="IPR012340">
    <property type="entry name" value="NA-bd_OB-fold"/>
</dbReference>
<dbReference type="InterPro" id="IPR000424">
    <property type="entry name" value="Primosome_PriB/ssb"/>
</dbReference>
<dbReference type="InterPro" id="IPR011344">
    <property type="entry name" value="ssDNA-bd"/>
</dbReference>
<dbReference type="NCBIfam" id="NF004972">
    <property type="entry name" value="PRK06341.1"/>
    <property type="match status" value="1"/>
</dbReference>
<dbReference type="NCBIfam" id="TIGR00621">
    <property type="entry name" value="ssb"/>
    <property type="match status" value="1"/>
</dbReference>
<dbReference type="PANTHER" id="PTHR10302">
    <property type="entry name" value="SINGLE-STRANDED DNA-BINDING PROTEIN"/>
    <property type="match status" value="1"/>
</dbReference>
<dbReference type="PANTHER" id="PTHR10302:SF27">
    <property type="entry name" value="SINGLE-STRANDED DNA-BINDING PROTEIN"/>
    <property type="match status" value="1"/>
</dbReference>
<dbReference type="Pfam" id="PF00436">
    <property type="entry name" value="SSB"/>
    <property type="match status" value="1"/>
</dbReference>
<dbReference type="SUPFAM" id="SSF50249">
    <property type="entry name" value="Nucleic acid-binding proteins"/>
    <property type="match status" value="1"/>
</dbReference>
<dbReference type="PROSITE" id="PS50935">
    <property type="entry name" value="SSB"/>
    <property type="match status" value="1"/>
</dbReference>
<evidence type="ECO:0000255" key="1">
    <source>
        <dbReference type="HAMAP-Rule" id="MF_00984"/>
    </source>
</evidence>
<evidence type="ECO:0000256" key="2">
    <source>
        <dbReference type="SAM" id="MobiDB-lite"/>
    </source>
</evidence>